<evidence type="ECO:0000255" key="1">
    <source>
        <dbReference type="HAMAP-Rule" id="MF_00037"/>
    </source>
</evidence>
<keyword id="KW-0131">Cell cycle</keyword>
<keyword id="KW-0132">Cell division</keyword>
<keyword id="KW-0133">Cell shape</keyword>
<keyword id="KW-0961">Cell wall biogenesis/degradation</keyword>
<keyword id="KW-0963">Cytoplasm</keyword>
<keyword id="KW-0274">FAD</keyword>
<keyword id="KW-0285">Flavoprotein</keyword>
<keyword id="KW-0521">NADP</keyword>
<keyword id="KW-0560">Oxidoreductase</keyword>
<keyword id="KW-0573">Peptidoglycan synthesis</keyword>
<accession>C0MEX9</accession>
<feature type="chain" id="PRO_1000202057" description="UDP-N-acetylenolpyruvoylglucosamine reductase">
    <location>
        <begin position="1"/>
        <end position="295"/>
    </location>
</feature>
<feature type="domain" description="FAD-binding PCMH-type" evidence="1">
    <location>
        <begin position="23"/>
        <end position="188"/>
    </location>
</feature>
<feature type="active site" evidence="1">
    <location>
        <position position="167"/>
    </location>
</feature>
<feature type="active site" description="Proton donor" evidence="1">
    <location>
        <position position="217"/>
    </location>
</feature>
<feature type="active site" evidence="1">
    <location>
        <position position="287"/>
    </location>
</feature>
<protein>
    <recommendedName>
        <fullName evidence="1">UDP-N-acetylenolpyruvoylglucosamine reductase</fullName>
        <ecNumber evidence="1">1.3.1.98</ecNumber>
    </recommendedName>
    <alternativeName>
        <fullName evidence="1">UDP-N-acetylmuramate dehydrogenase</fullName>
    </alternativeName>
</protein>
<name>MURB_STRS7</name>
<dbReference type="EC" id="1.3.1.98" evidence="1"/>
<dbReference type="EMBL" id="FM204884">
    <property type="protein sequence ID" value="CAW99147.1"/>
    <property type="molecule type" value="Genomic_DNA"/>
</dbReference>
<dbReference type="SMR" id="C0MEX9"/>
<dbReference type="KEGG" id="seq:SZO_09060"/>
<dbReference type="eggNOG" id="COG0812">
    <property type="taxonomic scope" value="Bacteria"/>
</dbReference>
<dbReference type="HOGENOM" id="CLU_035304_1_1_9"/>
<dbReference type="UniPathway" id="UPA00219"/>
<dbReference type="Proteomes" id="UP000001368">
    <property type="component" value="Chromosome"/>
</dbReference>
<dbReference type="GO" id="GO:0005829">
    <property type="term" value="C:cytosol"/>
    <property type="evidence" value="ECO:0007669"/>
    <property type="project" value="TreeGrafter"/>
</dbReference>
<dbReference type="GO" id="GO:0071949">
    <property type="term" value="F:FAD binding"/>
    <property type="evidence" value="ECO:0007669"/>
    <property type="project" value="InterPro"/>
</dbReference>
<dbReference type="GO" id="GO:0008762">
    <property type="term" value="F:UDP-N-acetylmuramate dehydrogenase activity"/>
    <property type="evidence" value="ECO:0007669"/>
    <property type="project" value="UniProtKB-UniRule"/>
</dbReference>
<dbReference type="GO" id="GO:0051301">
    <property type="term" value="P:cell division"/>
    <property type="evidence" value="ECO:0007669"/>
    <property type="project" value="UniProtKB-KW"/>
</dbReference>
<dbReference type="GO" id="GO:0071555">
    <property type="term" value="P:cell wall organization"/>
    <property type="evidence" value="ECO:0007669"/>
    <property type="project" value="UniProtKB-KW"/>
</dbReference>
<dbReference type="GO" id="GO:0009252">
    <property type="term" value="P:peptidoglycan biosynthetic process"/>
    <property type="evidence" value="ECO:0007669"/>
    <property type="project" value="UniProtKB-UniRule"/>
</dbReference>
<dbReference type="GO" id="GO:0008360">
    <property type="term" value="P:regulation of cell shape"/>
    <property type="evidence" value="ECO:0007669"/>
    <property type="project" value="UniProtKB-KW"/>
</dbReference>
<dbReference type="Gene3D" id="3.30.465.10">
    <property type="match status" value="1"/>
</dbReference>
<dbReference type="Gene3D" id="3.90.78.10">
    <property type="entry name" value="UDP-N-acetylenolpyruvoylglucosamine reductase, C-terminal domain"/>
    <property type="match status" value="1"/>
</dbReference>
<dbReference type="Gene3D" id="3.30.43.10">
    <property type="entry name" value="Uridine Diphospho-n-acetylenolpyruvylglucosamine Reductase, domain 2"/>
    <property type="match status" value="1"/>
</dbReference>
<dbReference type="HAMAP" id="MF_00037">
    <property type="entry name" value="MurB"/>
    <property type="match status" value="1"/>
</dbReference>
<dbReference type="InterPro" id="IPR016166">
    <property type="entry name" value="FAD-bd_PCMH"/>
</dbReference>
<dbReference type="InterPro" id="IPR036318">
    <property type="entry name" value="FAD-bd_PCMH-like_sf"/>
</dbReference>
<dbReference type="InterPro" id="IPR016167">
    <property type="entry name" value="FAD-bd_PCMH_sub1"/>
</dbReference>
<dbReference type="InterPro" id="IPR016169">
    <property type="entry name" value="FAD-bd_PCMH_sub2"/>
</dbReference>
<dbReference type="InterPro" id="IPR003170">
    <property type="entry name" value="MurB"/>
</dbReference>
<dbReference type="InterPro" id="IPR011601">
    <property type="entry name" value="MurB_C"/>
</dbReference>
<dbReference type="InterPro" id="IPR036635">
    <property type="entry name" value="MurB_C_sf"/>
</dbReference>
<dbReference type="InterPro" id="IPR006094">
    <property type="entry name" value="Oxid_FAD_bind_N"/>
</dbReference>
<dbReference type="NCBIfam" id="TIGR00179">
    <property type="entry name" value="murB"/>
    <property type="match status" value="1"/>
</dbReference>
<dbReference type="NCBIfam" id="NF010480">
    <property type="entry name" value="PRK13905.1"/>
    <property type="match status" value="1"/>
</dbReference>
<dbReference type="PANTHER" id="PTHR21071">
    <property type="entry name" value="UDP-N-ACETYLENOLPYRUVOYLGLUCOSAMINE REDUCTASE"/>
    <property type="match status" value="1"/>
</dbReference>
<dbReference type="PANTHER" id="PTHR21071:SF4">
    <property type="entry name" value="UDP-N-ACETYLENOLPYRUVOYLGLUCOSAMINE REDUCTASE"/>
    <property type="match status" value="1"/>
</dbReference>
<dbReference type="Pfam" id="PF01565">
    <property type="entry name" value="FAD_binding_4"/>
    <property type="match status" value="1"/>
</dbReference>
<dbReference type="Pfam" id="PF02873">
    <property type="entry name" value="MurB_C"/>
    <property type="match status" value="1"/>
</dbReference>
<dbReference type="SUPFAM" id="SSF56176">
    <property type="entry name" value="FAD-binding/transporter-associated domain-like"/>
    <property type="match status" value="1"/>
</dbReference>
<dbReference type="SUPFAM" id="SSF56194">
    <property type="entry name" value="Uridine diphospho-N-Acetylenolpyruvylglucosamine reductase, MurB, C-terminal domain"/>
    <property type="match status" value="1"/>
</dbReference>
<dbReference type="PROSITE" id="PS51387">
    <property type="entry name" value="FAD_PCMH"/>
    <property type="match status" value="1"/>
</dbReference>
<organism>
    <name type="scientific">Streptococcus equi subsp. zooepidemicus (strain H70)</name>
    <dbReference type="NCBI Taxonomy" id="553483"/>
    <lineage>
        <taxon>Bacteria</taxon>
        <taxon>Bacillati</taxon>
        <taxon>Bacillota</taxon>
        <taxon>Bacilli</taxon>
        <taxon>Lactobacillales</taxon>
        <taxon>Streptococcaceae</taxon>
        <taxon>Streptococcus</taxon>
    </lineage>
</organism>
<gene>
    <name evidence="1" type="primary">murB</name>
    <name type="ordered locus">SZO_09060</name>
</gene>
<reference key="1">
    <citation type="journal article" date="2009" name="PLoS Pathog.">
        <title>Genomic evidence for the evolution of Streptococcus equi: host restriction, increased virulence, and genetic exchange with human pathogens.</title>
        <authorList>
            <person name="Holden M.T.G."/>
            <person name="Heather Z."/>
            <person name="Paillot R."/>
            <person name="Steward K.F."/>
            <person name="Webb K."/>
            <person name="Ainslie F."/>
            <person name="Jourdan T."/>
            <person name="Bason N.C."/>
            <person name="Holroyd N.E."/>
            <person name="Mungall K."/>
            <person name="Quail M.A."/>
            <person name="Sanders M."/>
            <person name="Simmonds M."/>
            <person name="Willey D."/>
            <person name="Brooks K."/>
            <person name="Aanensen D.M."/>
            <person name="Spratt B.G."/>
            <person name="Jolley K.A."/>
            <person name="Maiden M.C.J."/>
            <person name="Kehoe M."/>
            <person name="Chanter N."/>
            <person name="Bentley S.D."/>
            <person name="Robinson C."/>
            <person name="Maskell D.J."/>
            <person name="Parkhill J."/>
            <person name="Waller A.S."/>
        </authorList>
    </citation>
    <scope>NUCLEOTIDE SEQUENCE [LARGE SCALE GENOMIC DNA]</scope>
    <source>
        <strain>H70</strain>
    </source>
</reference>
<proteinExistence type="inferred from homology"/>
<comment type="function">
    <text evidence="1">Cell wall formation.</text>
</comment>
<comment type="catalytic activity">
    <reaction evidence="1">
        <text>UDP-N-acetyl-alpha-D-muramate + NADP(+) = UDP-N-acetyl-3-O-(1-carboxyvinyl)-alpha-D-glucosamine + NADPH + H(+)</text>
        <dbReference type="Rhea" id="RHEA:12248"/>
        <dbReference type="ChEBI" id="CHEBI:15378"/>
        <dbReference type="ChEBI" id="CHEBI:57783"/>
        <dbReference type="ChEBI" id="CHEBI:58349"/>
        <dbReference type="ChEBI" id="CHEBI:68483"/>
        <dbReference type="ChEBI" id="CHEBI:70757"/>
        <dbReference type="EC" id="1.3.1.98"/>
    </reaction>
</comment>
<comment type="cofactor">
    <cofactor evidence="1">
        <name>FAD</name>
        <dbReference type="ChEBI" id="CHEBI:57692"/>
    </cofactor>
</comment>
<comment type="pathway">
    <text evidence="1">Cell wall biogenesis; peptidoglycan biosynthesis.</text>
</comment>
<comment type="subcellular location">
    <subcellularLocation>
        <location evidence="1">Cytoplasm</location>
    </subcellularLocation>
</comment>
<comment type="similarity">
    <text evidence="1">Belongs to the MurB family.</text>
</comment>
<sequence length="295" mass="32342">MIAELEGIDIRENEALKHYTYTQVGGPADFLAFPRNHYELSRIVDYANHNHIPWMVLGNASNLIVRDGGIRGFVIMFDKLNTVRLNGYTLEAEAGANLIETTKVAKFHSLTGFEFACGIPGSIGGAVFMNAGAYGGEIAHIFLSAKVLTPEGKIKKISAREMAFGYRHSVIQETGDIVISAKFALKPGNHDSICQEMNRLNHLRQLKQPLEFPSCGSVFKRPPGHFAGQLIMDANLKGHRVGGVEVSKKHAGFMINVADGSAKDYEELIAHVIKTVEQTSGVRLEPEVRIIGESL</sequence>